<accession>P69495</accession>
<accession>Q59AA7</accession>
<evidence type="ECO:0000250" key="1"/>
<evidence type="ECO:0000250" key="2">
    <source>
        <dbReference type="UniProtKB" id="Q7Z094"/>
    </source>
</evidence>
<evidence type="ECO:0000255" key="3"/>
<evidence type="ECO:0000305" key="4"/>
<reference key="1">
    <citation type="journal article" date="2004" name="Toxicon">
        <title>Novel conopeptides of the I-superfamily occur in several clades of cone snails.</title>
        <authorList>
            <person name="Kauferstein S."/>
            <person name="Huys I."/>
            <person name="Kuch U."/>
            <person name="Melaun C."/>
            <person name="Tytgat J."/>
            <person name="Mebs D."/>
        </authorList>
    </citation>
    <scope>NUCLEOTIDE SEQUENCE [MRNA]</scope>
    <source>
        <tissue>Venom duct</tissue>
    </source>
</reference>
<organism>
    <name type="scientific">Conus imperialis</name>
    <name type="common">Imperial cone</name>
    <dbReference type="NCBI Taxonomy" id="35631"/>
    <lineage>
        <taxon>Eukaryota</taxon>
        <taxon>Metazoa</taxon>
        <taxon>Spiralia</taxon>
        <taxon>Lophotrochozoa</taxon>
        <taxon>Mollusca</taxon>
        <taxon>Gastropoda</taxon>
        <taxon>Caenogastropoda</taxon>
        <taxon>Neogastropoda</taxon>
        <taxon>Conoidea</taxon>
        <taxon>Conidae</taxon>
        <taxon>Conus</taxon>
        <taxon>Stephanoconus</taxon>
    </lineage>
</organism>
<protein>
    <recommendedName>
        <fullName>Conotoxin Im11.4</fullName>
    </recommendedName>
</protein>
<feature type="signal peptide" evidence="3">
    <location>
        <begin position="1"/>
        <end position="26"/>
    </location>
</feature>
<feature type="chain" id="PRO_0000035090" description="Conotoxin Im11.4">
    <location>
        <begin position="27"/>
        <end position="57"/>
    </location>
</feature>
<feature type="propeptide" id="PRO_0000035091" evidence="1">
    <location>
        <begin position="61"/>
        <end position="64"/>
    </location>
</feature>
<feature type="modified residue" description="Histidine amide" evidence="1">
    <location>
        <position position="57"/>
    </location>
</feature>
<feature type="disulfide bond" evidence="2">
    <location>
        <begin position="27"/>
        <end position="41"/>
    </location>
</feature>
<feature type="disulfide bond" evidence="2">
    <location>
        <begin position="34"/>
        <end position="46"/>
    </location>
</feature>
<feature type="disulfide bond" evidence="2">
    <location>
        <begin position="40"/>
        <end position="50"/>
    </location>
</feature>
<feature type="disulfide bond" evidence="2">
    <location>
        <begin position="45"/>
        <end position="54"/>
    </location>
</feature>
<sequence length="64" mass="6995">MMFRLTSVSCILLVIAFLNLVGLTNACTSEGYSCSSDSNCCKNVCCWNVCESHCGHHGKRATFQ</sequence>
<proteinExistence type="evidence at transcript level"/>
<keyword id="KW-0027">Amidation</keyword>
<keyword id="KW-0165">Cleavage on pair of basic residues</keyword>
<keyword id="KW-1015">Disulfide bond</keyword>
<keyword id="KW-0964">Secreted</keyword>
<keyword id="KW-0732">Signal</keyword>
<keyword id="KW-0800">Toxin</keyword>
<dbReference type="EMBL" id="AJ746186">
    <property type="protein sequence ID" value="CAG34094.1"/>
    <property type="molecule type" value="mRNA"/>
</dbReference>
<dbReference type="SMR" id="P69495"/>
<dbReference type="ConoServer" id="1393">
    <property type="toxin name" value="Im11.4 precursor"/>
</dbReference>
<dbReference type="GO" id="GO:0005576">
    <property type="term" value="C:extracellular region"/>
    <property type="evidence" value="ECO:0007669"/>
    <property type="project" value="UniProtKB-SubCell"/>
</dbReference>
<dbReference type="GO" id="GO:0090729">
    <property type="term" value="F:toxin activity"/>
    <property type="evidence" value="ECO:0007669"/>
    <property type="project" value="UniProtKB-KW"/>
</dbReference>
<dbReference type="InterPro" id="IPR013141">
    <property type="entry name" value="Conotoxin-I_CS"/>
</dbReference>
<dbReference type="InterPro" id="IPR020242">
    <property type="entry name" value="Conotoxin_I2"/>
</dbReference>
<dbReference type="Pfam" id="PF17557">
    <property type="entry name" value="Conotoxin_I2"/>
    <property type="match status" value="1"/>
</dbReference>
<dbReference type="PROSITE" id="PS60019">
    <property type="entry name" value="I_CONOTOXIN"/>
    <property type="match status" value="1"/>
</dbReference>
<name>I21_CONIM</name>
<comment type="subcellular location">
    <subcellularLocation>
        <location evidence="1">Secreted</location>
    </subcellularLocation>
</comment>
<comment type="tissue specificity">
    <text>Expressed by the venom duct.</text>
</comment>
<comment type="domain">
    <text>The cysteine framework is XI (C-C-CC-CC-C-C).</text>
</comment>
<comment type="similarity">
    <text evidence="4">Belongs to the conotoxin I2 superfamily.</text>
</comment>